<organism>
    <name type="scientific">Geobacillus thermodenitrificans (strain NG80-2)</name>
    <dbReference type="NCBI Taxonomy" id="420246"/>
    <lineage>
        <taxon>Bacteria</taxon>
        <taxon>Bacillati</taxon>
        <taxon>Bacillota</taxon>
        <taxon>Bacilli</taxon>
        <taxon>Bacillales</taxon>
        <taxon>Anoxybacillaceae</taxon>
        <taxon>Geobacillus</taxon>
    </lineage>
</organism>
<gene>
    <name evidence="1" type="primary">smpB</name>
    <name type="ordered locus">GTNG_2997</name>
</gene>
<evidence type="ECO:0000255" key="1">
    <source>
        <dbReference type="HAMAP-Rule" id="MF_00023"/>
    </source>
</evidence>
<evidence type="ECO:0000305" key="2"/>
<comment type="function">
    <text evidence="1">Required for rescue of stalled ribosomes mediated by trans-translation. Binds to transfer-messenger RNA (tmRNA), required for stable association of tmRNA with ribosomes. tmRNA and SmpB together mimic tRNA shape, replacing the anticodon stem-loop with SmpB. tmRNA is encoded by the ssrA gene; the 2 termini fold to resemble tRNA(Ala) and it encodes a 'tag peptide', a short internal open reading frame. During trans-translation Ala-aminoacylated tmRNA acts like a tRNA, entering the A-site of stalled ribosomes, displacing the stalled mRNA. The ribosome then switches to translate the ORF on the tmRNA; the nascent peptide is terminated with the 'tag peptide' encoded by the tmRNA and targeted for degradation. The ribosome is freed to recommence translation, which seems to be the essential function of trans-translation.</text>
</comment>
<comment type="subcellular location">
    <subcellularLocation>
        <location evidence="1">Cytoplasm</location>
    </subcellularLocation>
    <text evidence="1">The tmRNA-SmpB complex associates with stalled 70S ribosomes.</text>
</comment>
<comment type="similarity">
    <text evidence="1">Belongs to the SmpB family.</text>
</comment>
<comment type="sequence caution" evidence="2">
    <conflict type="erroneous initiation">
        <sequence resource="EMBL-CDS" id="ABO68342"/>
    </conflict>
    <text>Extended N-terminus.</text>
</comment>
<protein>
    <recommendedName>
        <fullName evidence="1">SsrA-binding protein</fullName>
    </recommendedName>
    <alternativeName>
        <fullName evidence="1">Small protein B</fullName>
    </alternativeName>
</protein>
<accession>A4ISN8</accession>
<name>SSRP_GEOTN</name>
<feature type="chain" id="PRO_0000331047" description="SsrA-binding protein">
    <location>
        <begin position="1"/>
        <end position="155"/>
    </location>
</feature>
<dbReference type="EMBL" id="CP000557">
    <property type="protein sequence ID" value="ABO68342.1"/>
    <property type="status" value="ALT_INIT"/>
    <property type="molecule type" value="Genomic_DNA"/>
</dbReference>
<dbReference type="RefSeq" id="WP_008880280.1">
    <property type="nucleotide sequence ID" value="NC_009328.1"/>
</dbReference>
<dbReference type="SMR" id="A4ISN8"/>
<dbReference type="GeneID" id="87622857"/>
<dbReference type="KEGG" id="gtn:GTNG_2997"/>
<dbReference type="eggNOG" id="COG0691">
    <property type="taxonomic scope" value="Bacteria"/>
</dbReference>
<dbReference type="HOGENOM" id="CLU_108953_0_0_9"/>
<dbReference type="Proteomes" id="UP000001578">
    <property type="component" value="Chromosome"/>
</dbReference>
<dbReference type="GO" id="GO:0005829">
    <property type="term" value="C:cytosol"/>
    <property type="evidence" value="ECO:0007669"/>
    <property type="project" value="TreeGrafter"/>
</dbReference>
<dbReference type="GO" id="GO:0003723">
    <property type="term" value="F:RNA binding"/>
    <property type="evidence" value="ECO:0007669"/>
    <property type="project" value="UniProtKB-UniRule"/>
</dbReference>
<dbReference type="GO" id="GO:0070929">
    <property type="term" value="P:trans-translation"/>
    <property type="evidence" value="ECO:0007669"/>
    <property type="project" value="UniProtKB-UniRule"/>
</dbReference>
<dbReference type="CDD" id="cd09294">
    <property type="entry name" value="SmpB"/>
    <property type="match status" value="1"/>
</dbReference>
<dbReference type="Gene3D" id="2.40.280.10">
    <property type="match status" value="1"/>
</dbReference>
<dbReference type="HAMAP" id="MF_00023">
    <property type="entry name" value="SmpB"/>
    <property type="match status" value="1"/>
</dbReference>
<dbReference type="InterPro" id="IPR023620">
    <property type="entry name" value="SmpB"/>
</dbReference>
<dbReference type="InterPro" id="IPR000037">
    <property type="entry name" value="SsrA-bd_prot"/>
</dbReference>
<dbReference type="InterPro" id="IPR020081">
    <property type="entry name" value="SsrA-bd_prot_CS"/>
</dbReference>
<dbReference type="NCBIfam" id="NF003843">
    <property type="entry name" value="PRK05422.1"/>
    <property type="match status" value="1"/>
</dbReference>
<dbReference type="NCBIfam" id="TIGR00086">
    <property type="entry name" value="smpB"/>
    <property type="match status" value="1"/>
</dbReference>
<dbReference type="PANTHER" id="PTHR30308:SF2">
    <property type="entry name" value="SSRA-BINDING PROTEIN"/>
    <property type="match status" value="1"/>
</dbReference>
<dbReference type="PANTHER" id="PTHR30308">
    <property type="entry name" value="TMRNA-BINDING COMPONENT OF TRANS-TRANSLATION TAGGING COMPLEX"/>
    <property type="match status" value="1"/>
</dbReference>
<dbReference type="Pfam" id="PF01668">
    <property type="entry name" value="SmpB"/>
    <property type="match status" value="1"/>
</dbReference>
<dbReference type="SUPFAM" id="SSF74982">
    <property type="entry name" value="Small protein B (SmpB)"/>
    <property type="match status" value="1"/>
</dbReference>
<dbReference type="PROSITE" id="PS01317">
    <property type="entry name" value="SSRP"/>
    <property type="match status" value="1"/>
</dbReference>
<keyword id="KW-0963">Cytoplasm</keyword>
<keyword id="KW-0694">RNA-binding</keyword>
<reference key="1">
    <citation type="journal article" date="2007" name="Proc. Natl. Acad. Sci. U.S.A.">
        <title>Genome and proteome of long-chain alkane degrading Geobacillus thermodenitrificans NG80-2 isolated from a deep-subsurface oil reservoir.</title>
        <authorList>
            <person name="Feng L."/>
            <person name="Wang W."/>
            <person name="Cheng J."/>
            <person name="Ren Y."/>
            <person name="Zhao G."/>
            <person name="Gao C."/>
            <person name="Tang Y."/>
            <person name="Liu X."/>
            <person name="Han W."/>
            <person name="Peng X."/>
            <person name="Liu R."/>
            <person name="Wang L."/>
        </authorList>
    </citation>
    <scope>NUCLEOTIDE SEQUENCE [LARGE SCALE GENOMIC DNA]</scope>
    <source>
        <strain>NG80-2</strain>
    </source>
</reference>
<proteinExistence type="inferred from homology"/>
<sequence length="155" mass="18272">MPKGEGKVIAQNKKARHDYFIEETYEAGLVLQGTEIKSIRNGRVNLKDSFAKVEKGEVFLHNMHISPYEQGNRYNHDPLRTRKLLLHRREINKLIGYTKEQGYTLVPLKLYIKNGFAKVELGVAKGKKKYDKREDMKRKEAQREIERAFRERQKI</sequence>